<evidence type="ECO:0000255" key="1">
    <source>
        <dbReference type="HAMAP-Rule" id="MF_00268"/>
    </source>
</evidence>
<evidence type="ECO:0000256" key="2">
    <source>
        <dbReference type="SAM" id="MobiDB-lite"/>
    </source>
</evidence>
<keyword id="KW-0067">ATP-binding</keyword>
<keyword id="KW-0963">Cytoplasm</keyword>
<keyword id="KW-0227">DNA damage</keyword>
<keyword id="KW-0233">DNA recombination</keyword>
<keyword id="KW-0234">DNA repair</keyword>
<keyword id="KW-0238">DNA-binding</keyword>
<keyword id="KW-0547">Nucleotide-binding</keyword>
<keyword id="KW-0742">SOS response</keyword>
<feature type="chain" id="PRO_1000114380" description="Protein RecA">
    <location>
        <begin position="1"/>
        <end position="348"/>
    </location>
</feature>
<feature type="region of interest" description="Disordered" evidence="2">
    <location>
        <begin position="326"/>
        <end position="348"/>
    </location>
</feature>
<feature type="compositionally biased region" description="Basic and acidic residues" evidence="2">
    <location>
        <begin position="326"/>
        <end position="336"/>
    </location>
</feature>
<feature type="compositionally biased region" description="Acidic residues" evidence="2">
    <location>
        <begin position="338"/>
        <end position="348"/>
    </location>
</feature>
<feature type="binding site" evidence="1">
    <location>
        <begin position="65"/>
        <end position="72"/>
    </location>
    <ligand>
        <name>ATP</name>
        <dbReference type="ChEBI" id="CHEBI:30616"/>
    </ligand>
</feature>
<dbReference type="EMBL" id="CP001139">
    <property type="protein sequence ID" value="ACH65442.1"/>
    <property type="molecule type" value="Genomic_DNA"/>
</dbReference>
<dbReference type="RefSeq" id="WP_005417772.1">
    <property type="nucleotide sequence ID" value="NC_011184.1"/>
</dbReference>
<dbReference type="SMR" id="B5FAD0"/>
<dbReference type="GeneID" id="54163173"/>
<dbReference type="KEGG" id="vfm:VFMJ11_0538"/>
<dbReference type="HOGENOM" id="CLU_040469_3_2_6"/>
<dbReference type="Proteomes" id="UP000001857">
    <property type="component" value="Chromosome I"/>
</dbReference>
<dbReference type="GO" id="GO:0005829">
    <property type="term" value="C:cytosol"/>
    <property type="evidence" value="ECO:0007669"/>
    <property type="project" value="TreeGrafter"/>
</dbReference>
<dbReference type="GO" id="GO:0005524">
    <property type="term" value="F:ATP binding"/>
    <property type="evidence" value="ECO:0007669"/>
    <property type="project" value="UniProtKB-UniRule"/>
</dbReference>
<dbReference type="GO" id="GO:0016887">
    <property type="term" value="F:ATP hydrolysis activity"/>
    <property type="evidence" value="ECO:0007669"/>
    <property type="project" value="InterPro"/>
</dbReference>
<dbReference type="GO" id="GO:0140664">
    <property type="term" value="F:ATP-dependent DNA damage sensor activity"/>
    <property type="evidence" value="ECO:0007669"/>
    <property type="project" value="InterPro"/>
</dbReference>
<dbReference type="GO" id="GO:0003684">
    <property type="term" value="F:damaged DNA binding"/>
    <property type="evidence" value="ECO:0007669"/>
    <property type="project" value="UniProtKB-UniRule"/>
</dbReference>
<dbReference type="GO" id="GO:0003697">
    <property type="term" value="F:single-stranded DNA binding"/>
    <property type="evidence" value="ECO:0007669"/>
    <property type="project" value="UniProtKB-UniRule"/>
</dbReference>
<dbReference type="GO" id="GO:0006310">
    <property type="term" value="P:DNA recombination"/>
    <property type="evidence" value="ECO:0007669"/>
    <property type="project" value="UniProtKB-UniRule"/>
</dbReference>
<dbReference type="GO" id="GO:0006281">
    <property type="term" value="P:DNA repair"/>
    <property type="evidence" value="ECO:0007669"/>
    <property type="project" value="UniProtKB-UniRule"/>
</dbReference>
<dbReference type="GO" id="GO:0009432">
    <property type="term" value="P:SOS response"/>
    <property type="evidence" value="ECO:0007669"/>
    <property type="project" value="UniProtKB-UniRule"/>
</dbReference>
<dbReference type="CDD" id="cd00983">
    <property type="entry name" value="RecA"/>
    <property type="match status" value="1"/>
</dbReference>
<dbReference type="FunFam" id="3.40.50.300:FF:000087">
    <property type="entry name" value="Recombinase RecA"/>
    <property type="match status" value="1"/>
</dbReference>
<dbReference type="Gene3D" id="3.40.50.300">
    <property type="entry name" value="P-loop containing nucleotide triphosphate hydrolases"/>
    <property type="match status" value="1"/>
</dbReference>
<dbReference type="HAMAP" id="MF_00268">
    <property type="entry name" value="RecA"/>
    <property type="match status" value="1"/>
</dbReference>
<dbReference type="InterPro" id="IPR003593">
    <property type="entry name" value="AAA+_ATPase"/>
</dbReference>
<dbReference type="InterPro" id="IPR013765">
    <property type="entry name" value="DNA_recomb/repair_RecA"/>
</dbReference>
<dbReference type="InterPro" id="IPR020584">
    <property type="entry name" value="DNA_recomb/repair_RecA_CS"/>
</dbReference>
<dbReference type="InterPro" id="IPR027417">
    <property type="entry name" value="P-loop_NTPase"/>
</dbReference>
<dbReference type="InterPro" id="IPR049261">
    <property type="entry name" value="RecA-like_C"/>
</dbReference>
<dbReference type="InterPro" id="IPR049428">
    <property type="entry name" value="RecA-like_N"/>
</dbReference>
<dbReference type="InterPro" id="IPR020588">
    <property type="entry name" value="RecA_ATP-bd"/>
</dbReference>
<dbReference type="InterPro" id="IPR023400">
    <property type="entry name" value="RecA_C_sf"/>
</dbReference>
<dbReference type="InterPro" id="IPR020587">
    <property type="entry name" value="RecA_monomer-monomer_interface"/>
</dbReference>
<dbReference type="NCBIfam" id="TIGR02012">
    <property type="entry name" value="tigrfam_recA"/>
    <property type="match status" value="1"/>
</dbReference>
<dbReference type="PANTHER" id="PTHR45900:SF1">
    <property type="entry name" value="MITOCHONDRIAL DNA REPAIR PROTEIN RECA HOMOLOG-RELATED"/>
    <property type="match status" value="1"/>
</dbReference>
<dbReference type="PANTHER" id="PTHR45900">
    <property type="entry name" value="RECA"/>
    <property type="match status" value="1"/>
</dbReference>
<dbReference type="Pfam" id="PF00154">
    <property type="entry name" value="RecA"/>
    <property type="match status" value="1"/>
</dbReference>
<dbReference type="Pfam" id="PF21096">
    <property type="entry name" value="RecA_C"/>
    <property type="match status" value="1"/>
</dbReference>
<dbReference type="PRINTS" id="PR00142">
    <property type="entry name" value="RECA"/>
</dbReference>
<dbReference type="SMART" id="SM00382">
    <property type="entry name" value="AAA"/>
    <property type="match status" value="1"/>
</dbReference>
<dbReference type="SUPFAM" id="SSF52540">
    <property type="entry name" value="P-loop containing nucleoside triphosphate hydrolases"/>
    <property type="match status" value="1"/>
</dbReference>
<dbReference type="SUPFAM" id="SSF54752">
    <property type="entry name" value="RecA protein, C-terminal domain"/>
    <property type="match status" value="1"/>
</dbReference>
<dbReference type="PROSITE" id="PS00321">
    <property type="entry name" value="RECA_1"/>
    <property type="match status" value="1"/>
</dbReference>
<dbReference type="PROSITE" id="PS50162">
    <property type="entry name" value="RECA_2"/>
    <property type="match status" value="1"/>
</dbReference>
<dbReference type="PROSITE" id="PS50163">
    <property type="entry name" value="RECA_3"/>
    <property type="match status" value="1"/>
</dbReference>
<comment type="function">
    <text evidence="1">Can catalyze the hydrolysis of ATP in the presence of single-stranded DNA, the ATP-dependent uptake of single-stranded DNA by duplex DNA, and the ATP-dependent hybridization of homologous single-stranded DNAs. It interacts with LexA causing its activation and leading to its autocatalytic cleavage.</text>
</comment>
<comment type="subcellular location">
    <subcellularLocation>
        <location evidence="1">Cytoplasm</location>
    </subcellularLocation>
</comment>
<comment type="similarity">
    <text evidence="1">Belongs to the RecA family.</text>
</comment>
<proteinExistence type="inferred from homology"/>
<sequence length="348" mass="37587">MDDNKKKALAAALGQIEKQFGKGSIMKLGDNRTMDVETVSTGSLSLDIALGAGGLPMGRIVEIFGPESSGKTTLTLELIAAAQREGKTCAFIDAEHALDPVYAKKLGVNIDELLVSQPDTGEQALEICDALARSGAVDVMVIDSVAALTPKAEIEGEMGDSHMGLQARMLSQAMRKLTGNLKQSNCMAIFINQIRMKIGVMFGNPETTTGGNALKFYASVRLDIRRTGAVKDGDEVVGNETRIKVVKNKIAAPFKQAETQIMYGQGFNREGELIDLGVKHKLVDKAGAWYSYNGDKIGQGKANASKFMRENTEVAAELDKKLREMLLTPAEEKPETDAAPEIEENEEF</sequence>
<gene>
    <name evidence="1" type="primary">recA</name>
    <name type="ordered locus">VFMJ11_0538</name>
</gene>
<name>RECA_ALIFM</name>
<accession>B5FAD0</accession>
<reference key="1">
    <citation type="submission" date="2008-08" db="EMBL/GenBank/DDBJ databases">
        <title>Complete sequence of Vibrio fischeri strain MJ11.</title>
        <authorList>
            <person name="Mandel M.J."/>
            <person name="Stabb E.V."/>
            <person name="Ruby E.G."/>
            <person name="Ferriera S."/>
            <person name="Johnson J."/>
            <person name="Kravitz S."/>
            <person name="Beeson K."/>
            <person name="Sutton G."/>
            <person name="Rogers Y.-H."/>
            <person name="Friedman R."/>
            <person name="Frazier M."/>
            <person name="Venter J.C."/>
        </authorList>
    </citation>
    <scope>NUCLEOTIDE SEQUENCE [LARGE SCALE GENOMIC DNA]</scope>
    <source>
        <strain>MJ11</strain>
    </source>
</reference>
<organism>
    <name type="scientific">Aliivibrio fischeri (strain MJ11)</name>
    <name type="common">Vibrio fischeri</name>
    <dbReference type="NCBI Taxonomy" id="388396"/>
    <lineage>
        <taxon>Bacteria</taxon>
        <taxon>Pseudomonadati</taxon>
        <taxon>Pseudomonadota</taxon>
        <taxon>Gammaproteobacteria</taxon>
        <taxon>Vibrionales</taxon>
        <taxon>Vibrionaceae</taxon>
        <taxon>Aliivibrio</taxon>
    </lineage>
</organism>
<protein>
    <recommendedName>
        <fullName evidence="1">Protein RecA</fullName>
    </recommendedName>
    <alternativeName>
        <fullName evidence="1">Recombinase A</fullName>
    </alternativeName>
</protein>